<evidence type="ECO:0000255" key="1">
    <source>
        <dbReference type="HAMAP-Rule" id="MF_00131"/>
    </source>
</evidence>
<sequence>MSRIAETFARLRAAGRIALMPYLTVGFPERTSTLELVPALEAAGASLFELGIPFSDPLADGTTIQRATQRALENGITIADCIATVAELRARRVAAPLLLMGYYNPLLRYGLERACAALAAAGGDGWIIPDLPLEEADDLRQLAAAHQLDLIMFIAPTTPPARISQITAQASGFLYIVSLTGVTGARQTLAGNLTDLIANVRQQTNLPLVVGFGISQPAHIAEVARIADGAIVGSALIDRLERLPPEDRVSGAAAYIRELLSAVARP</sequence>
<feature type="chain" id="PRO_1000198706" description="Tryptophan synthase alpha chain">
    <location>
        <begin position="1"/>
        <end position="266"/>
    </location>
</feature>
<feature type="active site" description="Proton acceptor" evidence="1">
    <location>
        <position position="49"/>
    </location>
</feature>
<feature type="active site" description="Proton acceptor" evidence="1">
    <location>
        <position position="60"/>
    </location>
</feature>
<gene>
    <name evidence="1" type="primary">trpA</name>
    <name type="ordered locus">Chy400_0739</name>
</gene>
<comment type="function">
    <text evidence="1">The alpha subunit is responsible for the aldol cleavage of indoleglycerol phosphate to indole and glyceraldehyde 3-phosphate.</text>
</comment>
<comment type="catalytic activity">
    <reaction evidence="1">
        <text>(1S,2R)-1-C-(indol-3-yl)glycerol 3-phosphate + L-serine = D-glyceraldehyde 3-phosphate + L-tryptophan + H2O</text>
        <dbReference type="Rhea" id="RHEA:10532"/>
        <dbReference type="ChEBI" id="CHEBI:15377"/>
        <dbReference type="ChEBI" id="CHEBI:33384"/>
        <dbReference type="ChEBI" id="CHEBI:57912"/>
        <dbReference type="ChEBI" id="CHEBI:58866"/>
        <dbReference type="ChEBI" id="CHEBI:59776"/>
        <dbReference type="EC" id="4.2.1.20"/>
    </reaction>
</comment>
<comment type="pathway">
    <text evidence="1">Amino-acid biosynthesis; L-tryptophan biosynthesis; L-tryptophan from chorismate: step 5/5.</text>
</comment>
<comment type="subunit">
    <text evidence="1">Tetramer of two alpha and two beta chains.</text>
</comment>
<comment type="similarity">
    <text evidence="1">Belongs to the TrpA family.</text>
</comment>
<reference key="1">
    <citation type="submission" date="2009-01" db="EMBL/GenBank/DDBJ databases">
        <title>Complete sequence of Chloroflexus sp. Y-400-fl.</title>
        <authorList>
            <consortium name="US DOE Joint Genome Institute"/>
            <person name="Lucas S."/>
            <person name="Copeland A."/>
            <person name="Lapidus A."/>
            <person name="Glavina del Rio T."/>
            <person name="Dalin E."/>
            <person name="Tice H."/>
            <person name="Bruce D."/>
            <person name="Goodwin L."/>
            <person name="Pitluck S."/>
            <person name="Sims D."/>
            <person name="Kiss H."/>
            <person name="Brettin T."/>
            <person name="Detter J.C."/>
            <person name="Han C."/>
            <person name="Larimer F."/>
            <person name="Land M."/>
            <person name="Hauser L."/>
            <person name="Kyrpides N."/>
            <person name="Ovchinnikova G."/>
            <person name="Bryant D.A."/>
            <person name="Richardson P."/>
        </authorList>
    </citation>
    <scope>NUCLEOTIDE SEQUENCE [LARGE SCALE GENOMIC DNA]</scope>
    <source>
        <strain>ATCC 29364 / DSM 637 / Y-400-fl</strain>
    </source>
</reference>
<name>TRPA_CHLSY</name>
<accession>B9LKB2</accession>
<keyword id="KW-0028">Amino-acid biosynthesis</keyword>
<keyword id="KW-0057">Aromatic amino acid biosynthesis</keyword>
<keyword id="KW-0456">Lyase</keyword>
<keyword id="KW-0822">Tryptophan biosynthesis</keyword>
<protein>
    <recommendedName>
        <fullName evidence="1">Tryptophan synthase alpha chain</fullName>
        <ecNumber evidence="1">4.2.1.20</ecNumber>
    </recommendedName>
</protein>
<organism>
    <name type="scientific">Chloroflexus aurantiacus (strain ATCC 29364 / DSM 637 / Y-400-fl)</name>
    <dbReference type="NCBI Taxonomy" id="480224"/>
    <lineage>
        <taxon>Bacteria</taxon>
        <taxon>Bacillati</taxon>
        <taxon>Chloroflexota</taxon>
        <taxon>Chloroflexia</taxon>
        <taxon>Chloroflexales</taxon>
        <taxon>Chloroflexineae</taxon>
        <taxon>Chloroflexaceae</taxon>
        <taxon>Chloroflexus</taxon>
    </lineage>
</organism>
<proteinExistence type="inferred from homology"/>
<dbReference type="EC" id="4.2.1.20" evidence="1"/>
<dbReference type="EMBL" id="CP001364">
    <property type="protein sequence ID" value="ACM52169.1"/>
    <property type="molecule type" value="Genomic_DNA"/>
</dbReference>
<dbReference type="SMR" id="B9LKB2"/>
<dbReference type="KEGG" id="chl:Chy400_0739"/>
<dbReference type="HOGENOM" id="CLU_016734_0_0_0"/>
<dbReference type="OrthoDB" id="9804578at2"/>
<dbReference type="UniPathway" id="UPA00035">
    <property type="reaction ID" value="UER00044"/>
</dbReference>
<dbReference type="GO" id="GO:0005829">
    <property type="term" value="C:cytosol"/>
    <property type="evidence" value="ECO:0007669"/>
    <property type="project" value="TreeGrafter"/>
</dbReference>
<dbReference type="GO" id="GO:0004834">
    <property type="term" value="F:tryptophan synthase activity"/>
    <property type="evidence" value="ECO:0007669"/>
    <property type="project" value="UniProtKB-UniRule"/>
</dbReference>
<dbReference type="CDD" id="cd04724">
    <property type="entry name" value="Tryptophan_synthase_alpha"/>
    <property type="match status" value="1"/>
</dbReference>
<dbReference type="FunFam" id="3.20.20.70:FF:000037">
    <property type="entry name" value="Tryptophan synthase alpha chain"/>
    <property type="match status" value="1"/>
</dbReference>
<dbReference type="Gene3D" id="3.20.20.70">
    <property type="entry name" value="Aldolase class I"/>
    <property type="match status" value="1"/>
</dbReference>
<dbReference type="HAMAP" id="MF_00131">
    <property type="entry name" value="Trp_synth_alpha"/>
    <property type="match status" value="1"/>
</dbReference>
<dbReference type="InterPro" id="IPR013785">
    <property type="entry name" value="Aldolase_TIM"/>
</dbReference>
<dbReference type="InterPro" id="IPR011060">
    <property type="entry name" value="RibuloseP-bd_barrel"/>
</dbReference>
<dbReference type="InterPro" id="IPR002028">
    <property type="entry name" value="Trp_synthase_suA"/>
</dbReference>
<dbReference type="NCBIfam" id="TIGR00262">
    <property type="entry name" value="trpA"/>
    <property type="match status" value="1"/>
</dbReference>
<dbReference type="PANTHER" id="PTHR43406:SF1">
    <property type="entry name" value="TRYPTOPHAN SYNTHASE ALPHA CHAIN, CHLOROPLASTIC"/>
    <property type="match status" value="1"/>
</dbReference>
<dbReference type="PANTHER" id="PTHR43406">
    <property type="entry name" value="TRYPTOPHAN SYNTHASE, ALPHA CHAIN"/>
    <property type="match status" value="1"/>
</dbReference>
<dbReference type="Pfam" id="PF00290">
    <property type="entry name" value="Trp_syntA"/>
    <property type="match status" value="1"/>
</dbReference>
<dbReference type="SUPFAM" id="SSF51366">
    <property type="entry name" value="Ribulose-phoshate binding barrel"/>
    <property type="match status" value="1"/>
</dbReference>